<proteinExistence type="inferred from homology"/>
<evidence type="ECO:0000255" key="1">
    <source>
        <dbReference type="HAMAP-Rule" id="MF_01369"/>
    </source>
</evidence>
<evidence type="ECO:0000305" key="2"/>
<sequence>MSDLNNPRDIIIAPVVSEKSYGLMEQGTYTFLVRPDSNKTQIKIAVEKIFGVKVSSVNTLNREGKTKRTRFGYGRRKSTKRAMVTLAAGSDPIDIFGGSAS</sequence>
<reference key="1">
    <citation type="journal article" date="2008" name="J. Biotechnol.">
        <title>Ultrafast pyrosequencing of Corynebacterium kroppenstedtii DSM44385 revealed insights into the physiology of a lipophilic corynebacterium that lacks mycolic acids.</title>
        <authorList>
            <person name="Tauch A."/>
            <person name="Schneider J."/>
            <person name="Szczepanowski R."/>
            <person name="Tilker A."/>
            <person name="Viehoever P."/>
            <person name="Gartemann K.-H."/>
            <person name="Arnold W."/>
            <person name="Blom J."/>
            <person name="Brinkrolf K."/>
            <person name="Brune I."/>
            <person name="Goetker S."/>
            <person name="Weisshaar B."/>
            <person name="Goesmann A."/>
            <person name="Droege M."/>
            <person name="Puehler A."/>
        </authorList>
    </citation>
    <scope>NUCLEOTIDE SEQUENCE [LARGE SCALE GENOMIC DNA]</scope>
    <source>
        <strain>DSM 44385 / JCM 11950 / CIP 105744 / CCUG 35717</strain>
    </source>
</reference>
<accession>C4LL50</accession>
<dbReference type="EMBL" id="CP001620">
    <property type="protein sequence ID" value="ACR18555.1"/>
    <property type="molecule type" value="Genomic_DNA"/>
</dbReference>
<dbReference type="RefSeq" id="WP_012732442.1">
    <property type="nucleotide sequence ID" value="NC_012704.1"/>
</dbReference>
<dbReference type="SMR" id="C4LL50"/>
<dbReference type="STRING" id="645127.ckrop_1835"/>
<dbReference type="GeneID" id="92726632"/>
<dbReference type="KEGG" id="ckp:ckrop_1835"/>
<dbReference type="eggNOG" id="COG0089">
    <property type="taxonomic scope" value="Bacteria"/>
</dbReference>
<dbReference type="HOGENOM" id="CLU_037562_3_2_11"/>
<dbReference type="OrthoDB" id="9793353at2"/>
<dbReference type="Proteomes" id="UP000001473">
    <property type="component" value="Chromosome"/>
</dbReference>
<dbReference type="GO" id="GO:1990904">
    <property type="term" value="C:ribonucleoprotein complex"/>
    <property type="evidence" value="ECO:0007669"/>
    <property type="project" value="UniProtKB-KW"/>
</dbReference>
<dbReference type="GO" id="GO:0005840">
    <property type="term" value="C:ribosome"/>
    <property type="evidence" value="ECO:0007669"/>
    <property type="project" value="UniProtKB-KW"/>
</dbReference>
<dbReference type="GO" id="GO:0019843">
    <property type="term" value="F:rRNA binding"/>
    <property type="evidence" value="ECO:0007669"/>
    <property type="project" value="UniProtKB-UniRule"/>
</dbReference>
<dbReference type="GO" id="GO:0003735">
    <property type="term" value="F:structural constituent of ribosome"/>
    <property type="evidence" value="ECO:0007669"/>
    <property type="project" value="InterPro"/>
</dbReference>
<dbReference type="GO" id="GO:0006412">
    <property type="term" value="P:translation"/>
    <property type="evidence" value="ECO:0007669"/>
    <property type="project" value="UniProtKB-UniRule"/>
</dbReference>
<dbReference type="FunFam" id="3.30.70.330:FF:000001">
    <property type="entry name" value="50S ribosomal protein L23"/>
    <property type="match status" value="1"/>
</dbReference>
<dbReference type="Gene3D" id="3.30.70.330">
    <property type="match status" value="1"/>
</dbReference>
<dbReference type="HAMAP" id="MF_01369_B">
    <property type="entry name" value="Ribosomal_uL23_B"/>
    <property type="match status" value="1"/>
</dbReference>
<dbReference type="InterPro" id="IPR012677">
    <property type="entry name" value="Nucleotide-bd_a/b_plait_sf"/>
</dbReference>
<dbReference type="InterPro" id="IPR013025">
    <property type="entry name" value="Ribosomal_uL23-like"/>
</dbReference>
<dbReference type="InterPro" id="IPR012678">
    <property type="entry name" value="Ribosomal_uL23/eL15/eS24_sf"/>
</dbReference>
<dbReference type="NCBIfam" id="NF004363">
    <property type="entry name" value="PRK05738.2-4"/>
    <property type="match status" value="1"/>
</dbReference>
<dbReference type="NCBIfam" id="NF004364">
    <property type="entry name" value="PRK05738.2-5"/>
    <property type="match status" value="1"/>
</dbReference>
<dbReference type="PANTHER" id="PTHR11620">
    <property type="entry name" value="60S RIBOSOMAL PROTEIN L23A"/>
    <property type="match status" value="1"/>
</dbReference>
<dbReference type="Pfam" id="PF00276">
    <property type="entry name" value="Ribosomal_L23"/>
    <property type="match status" value="1"/>
</dbReference>
<dbReference type="SUPFAM" id="SSF54189">
    <property type="entry name" value="Ribosomal proteins S24e, L23 and L15e"/>
    <property type="match status" value="1"/>
</dbReference>
<keyword id="KW-1185">Reference proteome</keyword>
<keyword id="KW-0687">Ribonucleoprotein</keyword>
<keyword id="KW-0689">Ribosomal protein</keyword>
<keyword id="KW-0694">RNA-binding</keyword>
<keyword id="KW-0699">rRNA-binding</keyword>
<organism>
    <name type="scientific">Corynebacterium kroppenstedtii (strain DSM 44385 / JCM 11950 / CIP 105744 / CCUG 35717)</name>
    <dbReference type="NCBI Taxonomy" id="645127"/>
    <lineage>
        <taxon>Bacteria</taxon>
        <taxon>Bacillati</taxon>
        <taxon>Actinomycetota</taxon>
        <taxon>Actinomycetes</taxon>
        <taxon>Mycobacteriales</taxon>
        <taxon>Corynebacteriaceae</taxon>
        <taxon>Corynebacterium</taxon>
    </lineage>
</organism>
<comment type="function">
    <text evidence="1">One of the early assembly proteins it binds 23S rRNA. One of the proteins that surrounds the polypeptide exit tunnel on the outside of the ribosome. Forms the main docking site for trigger factor binding to the ribosome.</text>
</comment>
<comment type="subunit">
    <text evidence="1">Part of the 50S ribosomal subunit. Contacts protein L29, and trigger factor when it is bound to the ribosome.</text>
</comment>
<comment type="similarity">
    <text evidence="1">Belongs to the universal ribosomal protein uL23 family.</text>
</comment>
<feature type="chain" id="PRO_1000215027" description="Large ribosomal subunit protein uL23">
    <location>
        <begin position="1"/>
        <end position="101"/>
    </location>
</feature>
<name>RL23_CORK4</name>
<protein>
    <recommendedName>
        <fullName evidence="1">Large ribosomal subunit protein uL23</fullName>
    </recommendedName>
    <alternativeName>
        <fullName evidence="2">50S ribosomal protein L23</fullName>
    </alternativeName>
</protein>
<gene>
    <name evidence="1" type="primary">rplW</name>
    <name type="ordered locus">ckrop_1835</name>
</gene>